<accession>B2G6F6</accession>
<organism>
    <name type="scientific">Limosilactobacillus reuteri subsp. reuteri (strain JCM 1112)</name>
    <name type="common">Lactobacillus reuteri</name>
    <dbReference type="NCBI Taxonomy" id="557433"/>
    <lineage>
        <taxon>Bacteria</taxon>
        <taxon>Bacillati</taxon>
        <taxon>Bacillota</taxon>
        <taxon>Bacilli</taxon>
        <taxon>Lactobacillales</taxon>
        <taxon>Lactobacillaceae</taxon>
        <taxon>Limosilactobacillus</taxon>
    </lineage>
</organism>
<sequence>MSKQENNEDMITLIDENGNEQLFKELFTFDSDDYGKSYIFIYPAEQENDDSVDIQAYIIADNEDNDGQDLVPIEDDKEWDMVEEVLNTFLDNDGNFKA</sequence>
<gene>
    <name type="ordered locus">LAR_0522</name>
</gene>
<comment type="similarity">
    <text evidence="1">Belongs to the UPF0473 family.</text>
</comment>
<dbReference type="EMBL" id="AP007281">
    <property type="protein sequence ID" value="BAG25038.1"/>
    <property type="molecule type" value="Genomic_DNA"/>
</dbReference>
<dbReference type="RefSeq" id="WP_003666689.1">
    <property type="nucleotide sequence ID" value="NC_010609.1"/>
</dbReference>
<dbReference type="SMR" id="B2G6F6"/>
<dbReference type="KEGG" id="lrf:LAR_0522"/>
<dbReference type="HOGENOM" id="CLU_146610_2_1_9"/>
<dbReference type="HAMAP" id="MF_01448">
    <property type="entry name" value="UPF0473"/>
    <property type="match status" value="1"/>
</dbReference>
<dbReference type="InterPro" id="IPR009711">
    <property type="entry name" value="UPF0473"/>
</dbReference>
<dbReference type="NCBIfam" id="NF010217">
    <property type="entry name" value="PRK13678.1-4"/>
    <property type="match status" value="1"/>
</dbReference>
<dbReference type="PANTHER" id="PTHR40066">
    <property type="entry name" value="UPF0473 PROTEIN CBO2561/CLC_2432"/>
    <property type="match status" value="1"/>
</dbReference>
<dbReference type="PANTHER" id="PTHR40066:SF1">
    <property type="entry name" value="UPF0473 PROTEIN CBO2561_CLC_2432"/>
    <property type="match status" value="1"/>
</dbReference>
<dbReference type="Pfam" id="PF06949">
    <property type="entry name" value="DUF1292"/>
    <property type="match status" value="1"/>
</dbReference>
<proteinExistence type="inferred from homology"/>
<evidence type="ECO:0000255" key="1">
    <source>
        <dbReference type="HAMAP-Rule" id="MF_01448"/>
    </source>
</evidence>
<feature type="chain" id="PRO_1000200981" description="UPF0473 protein LAR_0522">
    <location>
        <begin position="1"/>
        <end position="98"/>
    </location>
</feature>
<name>Y522_LIMRJ</name>
<protein>
    <recommendedName>
        <fullName evidence="1">UPF0473 protein LAR_0522</fullName>
    </recommendedName>
</protein>
<reference key="1">
    <citation type="journal article" date="2008" name="DNA Res.">
        <title>Comparative genome analysis of Lactobacillus reuteri and Lactobacillus fermentum reveal a genomic island for reuterin and cobalamin production.</title>
        <authorList>
            <person name="Morita H."/>
            <person name="Toh H."/>
            <person name="Fukuda S."/>
            <person name="Horikawa H."/>
            <person name="Oshima K."/>
            <person name="Suzuki T."/>
            <person name="Murakami M."/>
            <person name="Hisamatsu S."/>
            <person name="Kato Y."/>
            <person name="Takizawa T."/>
            <person name="Fukuoka H."/>
            <person name="Yoshimura T."/>
            <person name="Itoh K."/>
            <person name="O'Sullivan D.J."/>
            <person name="McKay L.L."/>
            <person name="Ohno H."/>
            <person name="Kikuchi J."/>
            <person name="Masaoka T."/>
            <person name="Hattori M."/>
        </authorList>
    </citation>
    <scope>NUCLEOTIDE SEQUENCE [LARGE SCALE GENOMIC DNA]</scope>
    <source>
        <strain>JCM 1112</strain>
    </source>
</reference>